<gene>
    <name type="primary">sibC</name>
    <name type="ORF">DDB_G0288195</name>
</gene>
<accession>Q54JA5</accession>
<sequence length="1954" mass="208451">MNKLFYLFILIASLFILTDASHFRFGTISWQPTTDYRTIKFTSNFAYRTTFFYSSTSSIKVGNLVNVGTLNFGSGVGSVTVSVTVTDFDVKNNWFTGTFTTTKAYPAQNSGTIREYTAIFTSCCRISSLLNNKDASWNITTSVQIDNKNELSMVNWSPVSGMIPIVQVVANKNNNFRVIASDQNVQNADSSALTFSFSKVYTMTQPSGMTIDSKGNCYFLPTQIGLYSTQIYILDSRGAYIVVDFILQSVAEPGTCDPTCSNAGTACNQNSQCKGCTNSGSTTIDTCTTSNYPPDFVSPPTPDDGDTKLFPIGASTSLTFSCKTIMSGRSTTIQTANLPVGVTTKTPVTGATSNTTITWTPTTANTGSYVVSLVCSDSTGLTSSVRSFTILVAKPDCGNGGYTESGVCKCVDNWDPASKCFECKDGYYGENCVAVPPCVNGVPNSGINGDGKCLCSNGWTGADCSISSSQSCKDLSNSNTSISYSNPSFVNPTKVQVYLTSTPNYEVPTIVSIPNPINNLDVYVLVDANLASTTAFGYIKSGMSTFVSNIENICETAQFGIGYFSDYTPSPISFSPSQVMGSPIAAAIGLYKPATYSTTSNGNSLLAATDAASASVGWNSGSFKVIVIITDSDHSSSSAQITAFTNKFIGKSIVPVVVSFGASSMTNWNSALTSAGFGSVVTASGTSASDWSAKANTGVKNVLSKIVYKSDPTATGSSFVSSVPSTVTVSSSSSTQQTVNGLKLSLPSGTTIVSPVATISAMGYGQTDISINYNRPPVATSGSFSVNQNSLATFKLTGTDPDANILQFKFTTFLTANAGVITDSNGKDVSKQQSNYYAASEIFTYTPFENYLASNTIRFVAFDGCVESNTYATISITINKVNQLPECSSISSTITTTLNTQSTFSMTATDFEDASPFLQFTKPTDLTAYGTFTYKGASITSSTKITTGDSVIFTQTVNPKNDATVTLEFRAIDTSNAFSQASCSVSFKIQHANVAPVSSSTSPISVIPRGSVSLTLVSTDSDSTKALFTITAIKNGNNGNFYTCSTNDCSCTSGSSDSTIISLKDQFSGISYSSTKANKLICFTNGEPSAISNYASISFTSTDDEGLESNTVSVVVNIVGDRANVAPVVTKIQDYSVYQDYLDSDAHVVTGTDADIDDYNPPNVNNLIAIITTPPSNGILVTVQNGNNVATQGNAPFTHYYRPNPGFKGTDSYSYQVMDTFKETSSVESTTVTVNPINHKPTLTVNSYSFTSQSGAGETQTLVTYDFDGDNVLCSVQAAPKQISMYDSENELITTLPKSLSSNSYSFKLLDASKISPTPFSSFSDSFIISCKDDSKLTTPYGVLSTGNVTGFVQFTYINTPPTTKGIQVELDQDTTEPFTFNGTDIESPSDLKAKIYALPANGQLLNGNVVLTSKLIGEETYELDALSYKPNAGLSNWNTIDNIGPLDSIPYSVVDQQGLVSDSDVVTFSVRPRNPPVYTGADVIDVLQNTRYPLNVQGKVGNGGSEVNIQVLKFSGRGTLSIAHSMGSEGTMDTEITSYPNSQTGSTSYNFAYMPPHNEYGNDFDFIEFKLFDGDLYSELYTITVNVIHVNQPPTIQLISYKVLDDTSKDNGEVLFDSTYIVNMNINTSVLIKYTGSDVDVDQVTPLLSTVTTALRGTLYTKDETVPDLKGSIIDRNHTTVEQSSDGYYYVVYSPVPDSSGNSYVRIPFFMTDNGGLDSPTLTAVINVNRYNIPPFVLAGNKTYSTTTKLALSVENVQFDDPDSGKSNNVSIVVSIVGENDENVASLEDIKISLKRMQNCELHTSLASISCLDTKSALNESIQTITVNAVTAGNYRLKLFVDDLGYNAPSAIRAQSHMNATGYVDVTFEEAETTTQTNDNKTVLTGAIAGAAAGTALIAAAAWRLLRKAAPPTDTFFSEAAFLGDGVSSNPLYEQSASAAENPLYQSASDTTD</sequence>
<proteinExistence type="evidence at protein level"/>
<keyword id="KW-0130">Cell adhesion</keyword>
<keyword id="KW-1015">Disulfide bond</keyword>
<keyword id="KW-0245">EGF-like domain</keyword>
<keyword id="KW-0325">Glycoprotein</keyword>
<keyword id="KW-0472">Membrane</keyword>
<keyword id="KW-1185">Reference proteome</keyword>
<keyword id="KW-0732">Signal</keyword>
<keyword id="KW-0812">Transmembrane</keyword>
<keyword id="KW-1133">Transmembrane helix</keyword>
<name>SIBC_DICDI</name>
<protein>
    <recommendedName>
        <fullName>Integrin beta-like protein C</fullName>
    </recommendedName>
</protein>
<dbReference type="EMBL" id="AAFI02000109">
    <property type="protein sequence ID" value="EAL63328.1"/>
    <property type="molecule type" value="Genomic_DNA"/>
</dbReference>
<dbReference type="RefSeq" id="XP_636831.1">
    <property type="nucleotide sequence ID" value="XM_631739.1"/>
</dbReference>
<dbReference type="IntAct" id="Q54JA5">
    <property type="interactions" value="1"/>
</dbReference>
<dbReference type="MINT" id="Q54JA5"/>
<dbReference type="STRING" id="44689.Q54JA5"/>
<dbReference type="GlyCosmos" id="Q54JA5">
    <property type="glycosylation" value="12 sites, No reported glycans"/>
</dbReference>
<dbReference type="GlyGen" id="Q54JA5">
    <property type="glycosylation" value="15 sites"/>
</dbReference>
<dbReference type="PaxDb" id="44689-DDB0233526"/>
<dbReference type="ABCD" id="Q54JA5">
    <property type="antibodies" value="2 sequenced antibodies"/>
</dbReference>
<dbReference type="EnsemblProtists" id="EAL63328">
    <property type="protein sequence ID" value="EAL63328"/>
    <property type="gene ID" value="DDB_G0288195"/>
</dbReference>
<dbReference type="GeneID" id="8626500"/>
<dbReference type="KEGG" id="ddi:DDB_G0288195"/>
<dbReference type="dictyBase" id="DDB_G0288195">
    <property type="gene designation" value="sibC"/>
</dbReference>
<dbReference type="VEuPathDB" id="AmoebaDB:DDB_G0288195"/>
<dbReference type="eggNOG" id="ENOG502R9GV">
    <property type="taxonomic scope" value="Eukaryota"/>
</dbReference>
<dbReference type="HOGENOM" id="CLU_234725_0_0_1"/>
<dbReference type="InParanoid" id="Q54JA5"/>
<dbReference type="OMA" id="YIVVDFI"/>
<dbReference type="PhylomeDB" id="Q54JA5"/>
<dbReference type="PRO" id="PR:Q54JA5"/>
<dbReference type="Proteomes" id="UP000002195">
    <property type="component" value="Chromosome 5"/>
</dbReference>
<dbReference type="GO" id="GO:0016020">
    <property type="term" value="C:membrane"/>
    <property type="evidence" value="ECO:0007669"/>
    <property type="project" value="UniProtKB-SubCell"/>
</dbReference>
<dbReference type="GO" id="GO:0007155">
    <property type="term" value="P:cell adhesion"/>
    <property type="evidence" value="ECO:0007669"/>
    <property type="project" value="UniProtKB-KW"/>
</dbReference>
<dbReference type="GO" id="GO:0006909">
    <property type="term" value="P:phagocytosis"/>
    <property type="evidence" value="ECO:0000315"/>
    <property type="project" value="dictyBase"/>
</dbReference>
<dbReference type="Gene3D" id="2.60.40.3440">
    <property type="match status" value="1"/>
</dbReference>
<dbReference type="Gene3D" id="3.40.50.410">
    <property type="entry name" value="von Willebrand factor, type A domain"/>
    <property type="match status" value="1"/>
</dbReference>
<dbReference type="InterPro" id="IPR000742">
    <property type="entry name" value="EGF-like_dom"/>
</dbReference>
<dbReference type="InterPro" id="IPR056851">
    <property type="entry name" value="Ig_SibA-E"/>
</dbReference>
<dbReference type="InterPro" id="IPR056847">
    <property type="entry name" value="Ig_SibA-E_2nd"/>
</dbReference>
<dbReference type="InterPro" id="IPR056849">
    <property type="entry name" value="Ig_SibA-E_3rd"/>
</dbReference>
<dbReference type="InterPro" id="IPR056844">
    <property type="entry name" value="SibA-E_N"/>
</dbReference>
<dbReference type="InterPro" id="IPR002035">
    <property type="entry name" value="VWF_A"/>
</dbReference>
<dbReference type="InterPro" id="IPR036465">
    <property type="entry name" value="vWFA_dom_sf"/>
</dbReference>
<dbReference type="PANTHER" id="PTHR24038:SF11">
    <property type="entry name" value="INTEGRIN BETA-LIKE PROTEIN E"/>
    <property type="match status" value="1"/>
</dbReference>
<dbReference type="PANTHER" id="PTHR24038">
    <property type="entry name" value="STABILIN"/>
    <property type="match status" value="1"/>
</dbReference>
<dbReference type="Pfam" id="PF24619">
    <property type="entry name" value="Ig_SibA"/>
    <property type="match status" value="1"/>
</dbReference>
<dbReference type="Pfam" id="PF24908">
    <property type="entry name" value="Ig_SIBA-E_2nd"/>
    <property type="match status" value="1"/>
</dbReference>
<dbReference type="Pfam" id="PF24910">
    <property type="entry name" value="Ig_SIBA-E_3rd"/>
    <property type="match status" value="1"/>
</dbReference>
<dbReference type="Pfam" id="PF24907">
    <property type="entry name" value="SIBA-E_N"/>
    <property type="match status" value="1"/>
</dbReference>
<dbReference type="Pfam" id="PF24909">
    <property type="entry name" value="vWA_SIBA-E"/>
    <property type="match status" value="1"/>
</dbReference>
<dbReference type="SUPFAM" id="SSF53300">
    <property type="entry name" value="vWA-like"/>
    <property type="match status" value="1"/>
</dbReference>
<dbReference type="PROSITE" id="PS00022">
    <property type="entry name" value="EGF_1"/>
    <property type="match status" value="1"/>
</dbReference>
<dbReference type="PROSITE" id="PS01186">
    <property type="entry name" value="EGF_2"/>
    <property type="match status" value="1"/>
</dbReference>
<dbReference type="PROSITE" id="PS50026">
    <property type="entry name" value="EGF_3"/>
    <property type="match status" value="1"/>
</dbReference>
<dbReference type="PROSITE" id="PS50234">
    <property type="entry name" value="VWFA"/>
    <property type="match status" value="1"/>
</dbReference>
<feature type="signal peptide" evidence="1">
    <location>
        <begin position="1"/>
        <end position="20"/>
    </location>
</feature>
<feature type="chain" id="PRO_0000312333" description="Integrin beta-like protein C">
    <location>
        <begin position="21"/>
        <end position="1954"/>
    </location>
</feature>
<feature type="topological domain" description="Extracellular" evidence="1">
    <location>
        <begin position="21"/>
        <end position="1883"/>
    </location>
</feature>
<feature type="transmembrane region" description="Helical" evidence="1">
    <location>
        <begin position="1884"/>
        <end position="1904"/>
    </location>
</feature>
<feature type="topological domain" description="Cytoplasmic" evidence="1">
    <location>
        <begin position="1905"/>
        <end position="1954"/>
    </location>
</feature>
<feature type="domain" description="EGF-like" evidence="2">
    <location>
        <begin position="428"/>
        <end position="465"/>
    </location>
</feature>
<feature type="domain" description="VWFA" evidence="3">
    <location>
        <begin position="521"/>
        <end position="706"/>
    </location>
</feature>
<feature type="glycosylation site" description="N-linked (GlcNAc...) asparagine" evidence="1">
    <location>
        <position position="138"/>
    </location>
</feature>
<feature type="glycosylation site" description="N-linked (GlcNAc...) asparagine" evidence="1">
    <location>
        <position position="354"/>
    </location>
</feature>
<feature type="glycosylation site" description="N-linked (GlcNAc...) asparagine" evidence="1">
    <location>
        <position position="479"/>
    </location>
</feature>
<feature type="glycosylation site" description="N-linked (GlcNAc...) asparagine" evidence="1">
    <location>
        <position position="1348"/>
    </location>
</feature>
<feature type="glycosylation site" description="N-linked (GlcNAc...) asparagine" evidence="1">
    <location>
        <position position="1382"/>
    </location>
</feature>
<feature type="glycosylation site" description="N-linked (GlcNAc...) asparagine" evidence="1">
    <location>
        <position position="1628"/>
    </location>
</feature>
<feature type="glycosylation site" description="N-linked (GlcNAc...) asparagine" evidence="1">
    <location>
        <position position="1678"/>
    </location>
</feature>
<feature type="glycosylation site" description="N-linked (GlcNAc...) asparagine" evidence="1">
    <location>
        <position position="1742"/>
    </location>
</feature>
<feature type="glycosylation site" description="N-linked (GlcNAc...) asparagine" evidence="1">
    <location>
        <position position="1770"/>
    </location>
</feature>
<feature type="glycosylation site" description="N-linked (GlcNAc...) asparagine" evidence="1">
    <location>
        <position position="1820"/>
    </location>
</feature>
<feature type="glycosylation site" description="N-linked (GlcNAc...) asparagine" evidence="1">
    <location>
        <position position="1860"/>
    </location>
</feature>
<feature type="glycosylation site" description="N-linked (GlcNAc...) asparagine" evidence="1">
    <location>
        <position position="1881"/>
    </location>
</feature>
<feature type="disulfide bond" evidence="2">
    <location>
        <begin position="438"/>
        <end position="453"/>
    </location>
</feature>
<feature type="disulfide bond" evidence="2">
    <location>
        <begin position="455"/>
        <end position="464"/>
    </location>
</feature>
<evidence type="ECO:0000255" key="1"/>
<evidence type="ECO:0000255" key="2">
    <source>
        <dbReference type="PROSITE-ProRule" id="PRU00076"/>
    </source>
</evidence>
<evidence type="ECO:0000255" key="3">
    <source>
        <dbReference type="PROSITE-ProRule" id="PRU00219"/>
    </source>
</evidence>
<evidence type="ECO:0000269" key="4">
    <source>
    </source>
</evidence>
<evidence type="ECO:0000305" key="5"/>
<reference key="1">
    <citation type="journal article" date="2005" name="Nature">
        <title>The genome of the social amoeba Dictyostelium discoideum.</title>
        <authorList>
            <person name="Eichinger L."/>
            <person name="Pachebat J.A."/>
            <person name="Gloeckner G."/>
            <person name="Rajandream M.A."/>
            <person name="Sucgang R."/>
            <person name="Berriman M."/>
            <person name="Song J."/>
            <person name="Olsen R."/>
            <person name="Szafranski K."/>
            <person name="Xu Q."/>
            <person name="Tunggal B."/>
            <person name="Kummerfeld S."/>
            <person name="Madera M."/>
            <person name="Konfortov B.A."/>
            <person name="Rivero F."/>
            <person name="Bankier A.T."/>
            <person name="Lehmann R."/>
            <person name="Hamlin N."/>
            <person name="Davies R."/>
            <person name="Gaudet P."/>
            <person name="Fey P."/>
            <person name="Pilcher K."/>
            <person name="Chen G."/>
            <person name="Saunders D."/>
            <person name="Sodergren E.J."/>
            <person name="Davis P."/>
            <person name="Kerhornou A."/>
            <person name="Nie X."/>
            <person name="Hall N."/>
            <person name="Anjard C."/>
            <person name="Hemphill L."/>
            <person name="Bason N."/>
            <person name="Farbrother P."/>
            <person name="Desany B."/>
            <person name="Just E."/>
            <person name="Morio T."/>
            <person name="Rost R."/>
            <person name="Churcher C.M."/>
            <person name="Cooper J."/>
            <person name="Haydock S."/>
            <person name="van Driessche N."/>
            <person name="Cronin A."/>
            <person name="Goodhead I."/>
            <person name="Muzny D.M."/>
            <person name="Mourier T."/>
            <person name="Pain A."/>
            <person name="Lu M."/>
            <person name="Harper D."/>
            <person name="Lindsay R."/>
            <person name="Hauser H."/>
            <person name="James K.D."/>
            <person name="Quiles M."/>
            <person name="Madan Babu M."/>
            <person name="Saito T."/>
            <person name="Buchrieser C."/>
            <person name="Wardroper A."/>
            <person name="Felder M."/>
            <person name="Thangavelu M."/>
            <person name="Johnson D."/>
            <person name="Knights A."/>
            <person name="Loulseged H."/>
            <person name="Mungall K.L."/>
            <person name="Oliver K."/>
            <person name="Price C."/>
            <person name="Quail M.A."/>
            <person name="Urushihara H."/>
            <person name="Hernandez J."/>
            <person name="Rabbinowitsch E."/>
            <person name="Steffen D."/>
            <person name="Sanders M."/>
            <person name="Ma J."/>
            <person name="Kohara Y."/>
            <person name="Sharp S."/>
            <person name="Simmonds M.N."/>
            <person name="Spiegler S."/>
            <person name="Tivey A."/>
            <person name="Sugano S."/>
            <person name="White B."/>
            <person name="Walker D."/>
            <person name="Woodward J.R."/>
            <person name="Winckler T."/>
            <person name="Tanaka Y."/>
            <person name="Shaulsky G."/>
            <person name="Schleicher M."/>
            <person name="Weinstock G.M."/>
            <person name="Rosenthal A."/>
            <person name="Cox E.C."/>
            <person name="Chisholm R.L."/>
            <person name="Gibbs R.A."/>
            <person name="Loomis W.F."/>
            <person name="Platzer M."/>
            <person name="Kay R.R."/>
            <person name="Williams J.G."/>
            <person name="Dear P.H."/>
            <person name="Noegel A.A."/>
            <person name="Barrell B.G."/>
            <person name="Kuspa A."/>
        </authorList>
    </citation>
    <scope>NUCLEOTIDE SEQUENCE [LARGE SCALE GENOMIC DNA]</scope>
    <source>
        <strain>AX4</strain>
    </source>
</reference>
<reference key="2">
    <citation type="journal article" date="2006" name="EMBO Rep.">
        <title>An adhesion molecule in free-living Dictyostelium amoebae with integrin beta features.</title>
        <authorList>
            <person name="Cornillon S."/>
            <person name="Gebbie L."/>
            <person name="Benghezal M."/>
            <person name="Nair P."/>
            <person name="Keller S."/>
            <person name="Wehrle-Haller B."/>
            <person name="Charette S.J."/>
            <person name="Brueckert F."/>
            <person name="Letourneur F."/>
            <person name="Cosson P."/>
        </authorList>
    </citation>
    <scope>IDENTIFICATION</scope>
    <scope>INTERACTION WITH TALA</scope>
</reference>
<organism>
    <name type="scientific">Dictyostelium discoideum</name>
    <name type="common">Social amoeba</name>
    <dbReference type="NCBI Taxonomy" id="44689"/>
    <lineage>
        <taxon>Eukaryota</taxon>
        <taxon>Amoebozoa</taxon>
        <taxon>Evosea</taxon>
        <taxon>Eumycetozoa</taxon>
        <taxon>Dictyostelia</taxon>
        <taxon>Dictyosteliales</taxon>
        <taxon>Dictyosteliaceae</taxon>
        <taxon>Dictyostelium</taxon>
    </lineage>
</organism>
<comment type="function">
    <text evidence="5">Implicated in cellular adhesion.</text>
</comment>
<comment type="subunit">
    <text evidence="4">Interacts with talA/talin.</text>
</comment>
<comment type="subcellular location">
    <subcellularLocation>
        <location evidence="5">Membrane</location>
        <topology evidence="5">Single-pass type I membrane protein</topology>
    </subcellularLocation>
</comment>
<comment type="similarity">
    <text evidence="5">Belongs to the SIB family.</text>
</comment>